<accession>B7L4M7</accession>
<feature type="chain" id="PRO_1000184612" description="Glutathione-regulated potassium-efflux system protein KefB">
    <location>
        <begin position="1"/>
        <end position="601"/>
    </location>
</feature>
<feature type="transmembrane region" description="Helical" evidence="1">
    <location>
        <begin position="4"/>
        <end position="24"/>
    </location>
</feature>
<feature type="transmembrane region" description="Helical" evidence="1">
    <location>
        <begin position="29"/>
        <end position="49"/>
    </location>
</feature>
<feature type="transmembrane region" description="Helical" evidence="1">
    <location>
        <begin position="55"/>
        <end position="75"/>
    </location>
</feature>
<feature type="transmembrane region" description="Helical" evidence="1">
    <location>
        <begin position="87"/>
        <end position="107"/>
    </location>
</feature>
<feature type="transmembrane region" description="Helical" evidence="1">
    <location>
        <begin position="115"/>
        <end position="135"/>
    </location>
</feature>
<feature type="transmembrane region" description="Helical" evidence="1">
    <location>
        <begin position="152"/>
        <end position="172"/>
    </location>
</feature>
<feature type="transmembrane region" description="Helical" evidence="1">
    <location>
        <begin position="177"/>
        <end position="197"/>
    </location>
</feature>
<feature type="transmembrane region" description="Helical" evidence="1">
    <location>
        <begin position="207"/>
        <end position="227"/>
    </location>
</feature>
<feature type="transmembrane region" description="Helical" evidence="1">
    <location>
        <begin position="230"/>
        <end position="250"/>
    </location>
</feature>
<feature type="transmembrane region" description="Helical" evidence="1">
    <location>
        <begin position="268"/>
        <end position="288"/>
    </location>
</feature>
<feature type="transmembrane region" description="Helical" evidence="1">
    <location>
        <begin position="291"/>
        <end position="311"/>
    </location>
</feature>
<feature type="transmembrane region" description="Helical" evidence="1">
    <location>
        <begin position="324"/>
        <end position="344"/>
    </location>
</feature>
<feature type="transmembrane region" description="Helical" evidence="1">
    <location>
        <begin position="356"/>
        <end position="376"/>
    </location>
</feature>
<feature type="domain" description="RCK N-terminal" evidence="2">
    <location>
        <begin position="400"/>
        <end position="519"/>
    </location>
</feature>
<sequence length="601" mass="66425">MEGSDFLLAGVLFLFAAVAAVPLASRLGIGAVLGYLLAGIAIGPWGLGFISDVDEILHFSELGVVFLMFIIGLELNPSKLWQLRRSIFGVGAAQVLLSAALLAGLLMLTDFAWQAAVVGGIGLAMSSTAMALQLMREKGMNRSESGQLGFSVLLFQDLAVIPALALVPLLAGSADEHFDWMKIGMKVLAFVGMLIGGRYLLRPVFRFIAASGVREVFTAATLLLVLGSALFMDALGLSMALGTFIAGVLLAESEYRHELETAIDPFKGLLLGLFFISVGMSLNLGVLYTHLLWVVISVVVLVAVKILVLYLLARLYGVRSSERMQFAGVLSQGGEFAFVLFSTASSQRLFQGDQMALLLVTVTLSMMTTPLLMKLVDKWLSRQFNGPEEEDEKPWVNDDKPQVIVVGFGRFGQVIGRLLMANKMRITVLERDISAVNLMRKYGYKVYYGDATQVDLLRSAGAEAAESIVITCNEPEDTMKLVEICQQHFPHLHILARARGRVEAHELLQAGVTQFSRETFSSALELGRKTLVTLGMHPHQAQRAQLHFRRLDMRMLRELIPMHADTVQISRAREARRELEEIFQREMQQERRQLDGWDEFE</sequence>
<name>KEFB_ECO55</name>
<organism>
    <name type="scientific">Escherichia coli (strain 55989 / EAEC)</name>
    <dbReference type="NCBI Taxonomy" id="585055"/>
    <lineage>
        <taxon>Bacteria</taxon>
        <taxon>Pseudomonadati</taxon>
        <taxon>Pseudomonadota</taxon>
        <taxon>Gammaproteobacteria</taxon>
        <taxon>Enterobacterales</taxon>
        <taxon>Enterobacteriaceae</taxon>
        <taxon>Escherichia</taxon>
    </lineage>
</organism>
<protein>
    <recommendedName>
        <fullName evidence="1">Glutathione-regulated potassium-efflux system protein KefB</fullName>
    </recommendedName>
    <alternativeName>
        <fullName evidence="1">K(+)/H(+) antiporter</fullName>
    </alternativeName>
</protein>
<evidence type="ECO:0000255" key="1">
    <source>
        <dbReference type="HAMAP-Rule" id="MF_01412"/>
    </source>
</evidence>
<evidence type="ECO:0000255" key="2">
    <source>
        <dbReference type="PROSITE-ProRule" id="PRU00543"/>
    </source>
</evidence>
<gene>
    <name evidence="1" type="primary">kefB</name>
    <name type="ordered locus">EC55989_3754</name>
</gene>
<dbReference type="EMBL" id="CU928145">
    <property type="protein sequence ID" value="CAV00070.1"/>
    <property type="molecule type" value="Genomic_DNA"/>
</dbReference>
<dbReference type="RefSeq" id="WP_000399122.1">
    <property type="nucleotide sequence ID" value="NC_011748.1"/>
</dbReference>
<dbReference type="SMR" id="B7L4M7"/>
<dbReference type="GeneID" id="93778647"/>
<dbReference type="KEGG" id="eck:EC55989_3754"/>
<dbReference type="HOGENOM" id="CLU_005126_9_3_6"/>
<dbReference type="Proteomes" id="UP000000746">
    <property type="component" value="Chromosome"/>
</dbReference>
<dbReference type="GO" id="GO:0005886">
    <property type="term" value="C:plasma membrane"/>
    <property type="evidence" value="ECO:0007669"/>
    <property type="project" value="UniProtKB-SubCell"/>
</dbReference>
<dbReference type="GO" id="GO:0015503">
    <property type="term" value="F:glutathione-regulated potassium exporter activity"/>
    <property type="evidence" value="ECO:0007669"/>
    <property type="project" value="UniProtKB-UniRule"/>
</dbReference>
<dbReference type="GO" id="GO:1902600">
    <property type="term" value="P:proton transmembrane transport"/>
    <property type="evidence" value="ECO:0007669"/>
    <property type="project" value="InterPro"/>
</dbReference>
<dbReference type="FunFam" id="1.20.1530.20:FF:000001">
    <property type="entry name" value="Glutathione-regulated potassium-efflux system protein KefB"/>
    <property type="match status" value="1"/>
</dbReference>
<dbReference type="FunFam" id="3.40.50.720:FF:000036">
    <property type="entry name" value="Glutathione-regulated potassium-efflux system protein KefB"/>
    <property type="match status" value="1"/>
</dbReference>
<dbReference type="Gene3D" id="1.20.1530.20">
    <property type="match status" value="1"/>
</dbReference>
<dbReference type="Gene3D" id="3.40.50.720">
    <property type="entry name" value="NAD(P)-binding Rossmann-like Domain"/>
    <property type="match status" value="1"/>
</dbReference>
<dbReference type="HAMAP" id="MF_01412">
    <property type="entry name" value="K_H_efflux_KefB"/>
    <property type="match status" value="1"/>
</dbReference>
<dbReference type="InterPro" id="IPR006153">
    <property type="entry name" value="Cation/H_exchanger_TM"/>
</dbReference>
<dbReference type="InterPro" id="IPR004771">
    <property type="entry name" value="K/H_exchanger"/>
</dbReference>
<dbReference type="InterPro" id="IPR020884">
    <property type="entry name" value="K_H_efflux_KefB"/>
</dbReference>
<dbReference type="InterPro" id="IPR038770">
    <property type="entry name" value="Na+/solute_symporter_sf"/>
</dbReference>
<dbReference type="InterPro" id="IPR036291">
    <property type="entry name" value="NAD(P)-bd_dom_sf"/>
</dbReference>
<dbReference type="InterPro" id="IPR003148">
    <property type="entry name" value="RCK_N"/>
</dbReference>
<dbReference type="NCBIfam" id="TIGR00932">
    <property type="entry name" value="2a37"/>
    <property type="match status" value="1"/>
</dbReference>
<dbReference type="NCBIfam" id="NF002973">
    <property type="entry name" value="PRK03659.1"/>
    <property type="match status" value="1"/>
</dbReference>
<dbReference type="PANTHER" id="PTHR46157">
    <property type="entry name" value="K(+) EFFLUX ANTIPORTER 3, CHLOROPLASTIC"/>
    <property type="match status" value="1"/>
</dbReference>
<dbReference type="PANTHER" id="PTHR46157:SF4">
    <property type="entry name" value="K(+) EFFLUX ANTIPORTER 3, CHLOROPLASTIC"/>
    <property type="match status" value="1"/>
</dbReference>
<dbReference type="Pfam" id="PF00999">
    <property type="entry name" value="Na_H_Exchanger"/>
    <property type="match status" value="1"/>
</dbReference>
<dbReference type="Pfam" id="PF02254">
    <property type="entry name" value="TrkA_N"/>
    <property type="match status" value="1"/>
</dbReference>
<dbReference type="SUPFAM" id="SSF51735">
    <property type="entry name" value="NAD(P)-binding Rossmann-fold domains"/>
    <property type="match status" value="1"/>
</dbReference>
<dbReference type="PROSITE" id="PS51201">
    <property type="entry name" value="RCK_N"/>
    <property type="match status" value="1"/>
</dbReference>
<keyword id="KW-0050">Antiport</keyword>
<keyword id="KW-0997">Cell inner membrane</keyword>
<keyword id="KW-1003">Cell membrane</keyword>
<keyword id="KW-0406">Ion transport</keyword>
<keyword id="KW-0472">Membrane</keyword>
<keyword id="KW-0630">Potassium</keyword>
<keyword id="KW-0633">Potassium transport</keyword>
<keyword id="KW-1185">Reference proteome</keyword>
<keyword id="KW-0812">Transmembrane</keyword>
<keyword id="KW-1133">Transmembrane helix</keyword>
<keyword id="KW-0813">Transport</keyword>
<proteinExistence type="inferred from homology"/>
<reference key="1">
    <citation type="journal article" date="2009" name="PLoS Genet.">
        <title>Organised genome dynamics in the Escherichia coli species results in highly diverse adaptive paths.</title>
        <authorList>
            <person name="Touchon M."/>
            <person name="Hoede C."/>
            <person name="Tenaillon O."/>
            <person name="Barbe V."/>
            <person name="Baeriswyl S."/>
            <person name="Bidet P."/>
            <person name="Bingen E."/>
            <person name="Bonacorsi S."/>
            <person name="Bouchier C."/>
            <person name="Bouvet O."/>
            <person name="Calteau A."/>
            <person name="Chiapello H."/>
            <person name="Clermont O."/>
            <person name="Cruveiller S."/>
            <person name="Danchin A."/>
            <person name="Diard M."/>
            <person name="Dossat C."/>
            <person name="Karoui M.E."/>
            <person name="Frapy E."/>
            <person name="Garry L."/>
            <person name="Ghigo J.M."/>
            <person name="Gilles A.M."/>
            <person name="Johnson J."/>
            <person name="Le Bouguenec C."/>
            <person name="Lescat M."/>
            <person name="Mangenot S."/>
            <person name="Martinez-Jehanne V."/>
            <person name="Matic I."/>
            <person name="Nassif X."/>
            <person name="Oztas S."/>
            <person name="Petit M.A."/>
            <person name="Pichon C."/>
            <person name="Rouy Z."/>
            <person name="Ruf C.S."/>
            <person name="Schneider D."/>
            <person name="Tourret J."/>
            <person name="Vacherie B."/>
            <person name="Vallenet D."/>
            <person name="Medigue C."/>
            <person name="Rocha E.P.C."/>
            <person name="Denamur E."/>
        </authorList>
    </citation>
    <scope>NUCLEOTIDE SEQUENCE [LARGE SCALE GENOMIC DNA]</scope>
    <source>
        <strain>55989 / EAEC</strain>
    </source>
</reference>
<comment type="function">
    <text evidence="1">Pore-forming subunit of a potassium efflux system that confers protection against electrophiles. Catalyzes K(+)/H(+) antiport.</text>
</comment>
<comment type="subunit">
    <text evidence="1">Interacts with the regulatory subunit KefG.</text>
</comment>
<comment type="subcellular location">
    <subcellularLocation>
        <location evidence="1">Cell inner membrane</location>
        <topology evidence="1">Multi-pass membrane protein</topology>
    </subcellularLocation>
</comment>
<comment type="similarity">
    <text evidence="1">Belongs to the monovalent cation:proton antiporter 2 (CPA2) transporter (TC 2.A.37) family. KefB subfamily.</text>
</comment>